<protein>
    <recommendedName>
        <fullName evidence="1">Thymidylate synthase</fullName>
        <shortName evidence="1">TS</shortName>
        <shortName evidence="1">TSase</shortName>
        <ecNumber evidence="1">2.1.1.45</ecNumber>
    </recommendedName>
</protein>
<keyword id="KW-0963">Cytoplasm</keyword>
<keyword id="KW-0489">Methyltransferase</keyword>
<keyword id="KW-0545">Nucleotide biosynthesis</keyword>
<keyword id="KW-1185">Reference proteome</keyword>
<keyword id="KW-0808">Transferase</keyword>
<sequence length="283" mass="32119">MKQYLDLCKRIVDEGEWVNNARTNKKCLTVINADLVYDVGNNQFPLVTTRKSFWKSAIAEILGYLRGYQNAADFRALGTKTWDANANENQAWLDNPNRKGPDDMGLIYGALGRAFPKPDGGHVDLLQQIVDDLSNGIDNRGEILTFYHPGAFDLGCLRPCMYEHHFSLLGDTLYLNSTQRSCDVPLGLNFNMVQVYVLLALMAQITGHKPGKAYHKIVNAHIYEDQLEPMRDVQLAREPFASPKLIINPKIKTLKDIETWVTLDDFSVEDYQHHDAIKYPFAV</sequence>
<evidence type="ECO:0000255" key="1">
    <source>
        <dbReference type="HAMAP-Rule" id="MF_00008"/>
    </source>
</evidence>
<organism>
    <name type="scientific">Shewanella frigidimarina (strain NCIMB 400)</name>
    <dbReference type="NCBI Taxonomy" id="318167"/>
    <lineage>
        <taxon>Bacteria</taxon>
        <taxon>Pseudomonadati</taxon>
        <taxon>Pseudomonadota</taxon>
        <taxon>Gammaproteobacteria</taxon>
        <taxon>Alteromonadales</taxon>
        <taxon>Shewanellaceae</taxon>
        <taxon>Shewanella</taxon>
    </lineage>
</organism>
<dbReference type="EC" id="2.1.1.45" evidence="1"/>
<dbReference type="EMBL" id="CP000447">
    <property type="protein sequence ID" value="ABI72781.1"/>
    <property type="molecule type" value="Genomic_DNA"/>
</dbReference>
<dbReference type="RefSeq" id="WP_011638390.1">
    <property type="nucleotide sequence ID" value="NC_008345.1"/>
</dbReference>
<dbReference type="SMR" id="Q07YY3"/>
<dbReference type="STRING" id="318167.Sfri_2942"/>
<dbReference type="KEGG" id="sfr:Sfri_2942"/>
<dbReference type="eggNOG" id="COG0207">
    <property type="taxonomic scope" value="Bacteria"/>
</dbReference>
<dbReference type="HOGENOM" id="CLU_021669_0_1_6"/>
<dbReference type="OrthoDB" id="9774633at2"/>
<dbReference type="UniPathway" id="UPA00575"/>
<dbReference type="Proteomes" id="UP000000684">
    <property type="component" value="Chromosome"/>
</dbReference>
<dbReference type="GO" id="GO:0005829">
    <property type="term" value="C:cytosol"/>
    <property type="evidence" value="ECO:0007669"/>
    <property type="project" value="TreeGrafter"/>
</dbReference>
<dbReference type="GO" id="GO:0004799">
    <property type="term" value="F:thymidylate synthase activity"/>
    <property type="evidence" value="ECO:0007669"/>
    <property type="project" value="UniProtKB-UniRule"/>
</dbReference>
<dbReference type="GO" id="GO:0006231">
    <property type="term" value="P:dTMP biosynthetic process"/>
    <property type="evidence" value="ECO:0007669"/>
    <property type="project" value="UniProtKB-UniRule"/>
</dbReference>
<dbReference type="GO" id="GO:0006235">
    <property type="term" value="P:dTTP biosynthetic process"/>
    <property type="evidence" value="ECO:0007669"/>
    <property type="project" value="UniProtKB-UniRule"/>
</dbReference>
<dbReference type="GO" id="GO:0032259">
    <property type="term" value="P:methylation"/>
    <property type="evidence" value="ECO:0007669"/>
    <property type="project" value="UniProtKB-KW"/>
</dbReference>
<dbReference type="CDD" id="cd00351">
    <property type="entry name" value="TS_Pyrimidine_HMase"/>
    <property type="match status" value="1"/>
</dbReference>
<dbReference type="Gene3D" id="3.30.572.10">
    <property type="entry name" value="Thymidylate synthase/dCMP hydroxymethylase domain"/>
    <property type="match status" value="1"/>
</dbReference>
<dbReference type="HAMAP" id="MF_00008">
    <property type="entry name" value="Thymidy_synth_bact"/>
    <property type="match status" value="1"/>
</dbReference>
<dbReference type="InterPro" id="IPR045097">
    <property type="entry name" value="Thymidate_synth/dCMP_Mease"/>
</dbReference>
<dbReference type="InterPro" id="IPR023451">
    <property type="entry name" value="Thymidate_synth/dCMP_Mease_dom"/>
</dbReference>
<dbReference type="InterPro" id="IPR036926">
    <property type="entry name" value="Thymidate_synth/dCMP_Mease_sf"/>
</dbReference>
<dbReference type="InterPro" id="IPR000398">
    <property type="entry name" value="Thymidylate_synthase"/>
</dbReference>
<dbReference type="InterPro" id="IPR020940">
    <property type="entry name" value="Thymidylate_synthase_AS"/>
</dbReference>
<dbReference type="NCBIfam" id="NF002498">
    <property type="entry name" value="PRK01827.1-4"/>
    <property type="match status" value="1"/>
</dbReference>
<dbReference type="NCBIfam" id="TIGR03284">
    <property type="entry name" value="thym_sym"/>
    <property type="match status" value="1"/>
</dbReference>
<dbReference type="PANTHER" id="PTHR11548:SF9">
    <property type="entry name" value="THYMIDYLATE SYNTHASE"/>
    <property type="match status" value="1"/>
</dbReference>
<dbReference type="PANTHER" id="PTHR11548">
    <property type="entry name" value="THYMIDYLATE SYNTHASE 1"/>
    <property type="match status" value="1"/>
</dbReference>
<dbReference type="Pfam" id="PF00303">
    <property type="entry name" value="Thymidylat_synt"/>
    <property type="match status" value="1"/>
</dbReference>
<dbReference type="PRINTS" id="PR00108">
    <property type="entry name" value="THYMDSNTHASE"/>
</dbReference>
<dbReference type="SUPFAM" id="SSF55831">
    <property type="entry name" value="Thymidylate synthase/dCMP hydroxymethylase"/>
    <property type="match status" value="1"/>
</dbReference>
<dbReference type="PROSITE" id="PS00091">
    <property type="entry name" value="THYMIDYLATE_SYNTHASE"/>
    <property type="match status" value="1"/>
</dbReference>
<gene>
    <name evidence="1" type="primary">thyA</name>
    <name type="ordered locus">Sfri_2942</name>
</gene>
<comment type="function">
    <text evidence="1">Catalyzes the reductive methylation of 2'-deoxyuridine-5'-monophosphate (dUMP) to 2'-deoxythymidine-5'-monophosphate (dTMP) while utilizing 5,10-methylenetetrahydrofolate (mTHF) as the methyl donor and reductant in the reaction, yielding dihydrofolate (DHF) as a by-product. This enzymatic reaction provides an intracellular de novo source of dTMP, an essential precursor for DNA biosynthesis.</text>
</comment>
<comment type="catalytic activity">
    <reaction evidence="1">
        <text>dUMP + (6R)-5,10-methylene-5,6,7,8-tetrahydrofolate = 7,8-dihydrofolate + dTMP</text>
        <dbReference type="Rhea" id="RHEA:12104"/>
        <dbReference type="ChEBI" id="CHEBI:15636"/>
        <dbReference type="ChEBI" id="CHEBI:57451"/>
        <dbReference type="ChEBI" id="CHEBI:63528"/>
        <dbReference type="ChEBI" id="CHEBI:246422"/>
        <dbReference type="EC" id="2.1.1.45"/>
    </reaction>
</comment>
<comment type="pathway">
    <text evidence="1">Pyrimidine metabolism; dTTP biosynthesis.</text>
</comment>
<comment type="subunit">
    <text evidence="1">Homodimer.</text>
</comment>
<comment type="subcellular location">
    <subcellularLocation>
        <location evidence="1">Cytoplasm</location>
    </subcellularLocation>
</comment>
<comment type="similarity">
    <text evidence="1">Belongs to the thymidylate synthase family. Bacterial-type ThyA subfamily.</text>
</comment>
<name>TYSY_SHEFN</name>
<accession>Q07YY3</accession>
<proteinExistence type="inferred from homology"/>
<feature type="chain" id="PRO_1000000671" description="Thymidylate synthase">
    <location>
        <begin position="1"/>
        <end position="283"/>
    </location>
</feature>
<feature type="active site" description="Nucleophile" evidence="1">
    <location>
        <position position="160"/>
    </location>
</feature>
<feature type="binding site" evidence="1">
    <location>
        <position position="22"/>
    </location>
    <ligand>
        <name>dUMP</name>
        <dbReference type="ChEBI" id="CHEBI:246422"/>
    </ligand>
</feature>
<feature type="binding site" evidence="1">
    <location>
        <begin position="180"/>
        <end position="183"/>
    </location>
    <ligand>
        <name>dUMP</name>
        <dbReference type="ChEBI" id="CHEBI:246422"/>
    </ligand>
</feature>
<feature type="binding site" evidence="1">
    <location>
        <position position="183"/>
    </location>
    <ligand>
        <name>(6R)-5,10-methylene-5,6,7,8-tetrahydrofolate</name>
        <dbReference type="ChEBI" id="CHEBI:15636"/>
    </ligand>
</feature>
<feature type="binding site" evidence="1">
    <location>
        <position position="191"/>
    </location>
    <ligand>
        <name>dUMP</name>
        <dbReference type="ChEBI" id="CHEBI:246422"/>
    </ligand>
</feature>
<feature type="binding site" evidence="1">
    <location>
        <begin position="221"/>
        <end position="223"/>
    </location>
    <ligand>
        <name>dUMP</name>
        <dbReference type="ChEBI" id="CHEBI:246422"/>
    </ligand>
</feature>
<feature type="binding site" evidence="1">
    <location>
        <position position="282"/>
    </location>
    <ligand>
        <name>(6R)-5,10-methylene-5,6,7,8-tetrahydrofolate</name>
        <dbReference type="ChEBI" id="CHEBI:15636"/>
    </ligand>
</feature>
<reference key="1">
    <citation type="submission" date="2006-08" db="EMBL/GenBank/DDBJ databases">
        <title>Complete sequence of Shewanella frigidimarina NCIMB 400.</title>
        <authorList>
            <consortium name="US DOE Joint Genome Institute"/>
            <person name="Copeland A."/>
            <person name="Lucas S."/>
            <person name="Lapidus A."/>
            <person name="Barry K."/>
            <person name="Detter J.C."/>
            <person name="Glavina del Rio T."/>
            <person name="Hammon N."/>
            <person name="Israni S."/>
            <person name="Dalin E."/>
            <person name="Tice H."/>
            <person name="Pitluck S."/>
            <person name="Fredrickson J.K."/>
            <person name="Kolker E."/>
            <person name="McCuel L.A."/>
            <person name="DiChristina T."/>
            <person name="Nealson K.H."/>
            <person name="Newman D."/>
            <person name="Tiedje J.M."/>
            <person name="Zhou J."/>
            <person name="Romine M.F."/>
            <person name="Culley D.E."/>
            <person name="Serres M."/>
            <person name="Chertkov O."/>
            <person name="Brettin T."/>
            <person name="Bruce D."/>
            <person name="Han C."/>
            <person name="Tapia R."/>
            <person name="Gilna P."/>
            <person name="Schmutz J."/>
            <person name="Larimer F."/>
            <person name="Land M."/>
            <person name="Hauser L."/>
            <person name="Kyrpides N."/>
            <person name="Mikhailova N."/>
            <person name="Richardson P."/>
        </authorList>
    </citation>
    <scope>NUCLEOTIDE SEQUENCE [LARGE SCALE GENOMIC DNA]</scope>
    <source>
        <strain>NCIMB 400</strain>
    </source>
</reference>